<comment type="function">
    <text evidence="1">Catalyzes the first step in the D-alanylation of lipoteichoic acid (LTA), the activation of D-alanine and its transfer onto the D-alanyl carrier protein (Dcp) DltC. In an ATP-dependent two-step reaction, forms a high energy D-alanyl-AMP intermediate, followed by transfer of the D-alanyl residue as a thiol ester to the phosphopantheinyl prosthetic group of the Dcp. D-alanylation of LTA plays an important role in modulating the properties of the cell wall in Gram-positive bacteria, influencing the net charge of the cell wall.</text>
</comment>
<comment type="catalytic activity">
    <reaction evidence="1">
        <text>holo-[D-alanyl-carrier protein] + D-alanine + ATP = D-alanyl-[D-alanyl-carrier protein] + AMP + diphosphate</text>
        <dbReference type="Rhea" id="RHEA:55132"/>
        <dbReference type="Rhea" id="RHEA-COMP:14102"/>
        <dbReference type="Rhea" id="RHEA-COMP:14103"/>
        <dbReference type="ChEBI" id="CHEBI:30616"/>
        <dbReference type="ChEBI" id="CHEBI:33019"/>
        <dbReference type="ChEBI" id="CHEBI:57416"/>
        <dbReference type="ChEBI" id="CHEBI:64479"/>
        <dbReference type="ChEBI" id="CHEBI:138620"/>
        <dbReference type="ChEBI" id="CHEBI:456215"/>
        <dbReference type="EC" id="6.2.1.54"/>
    </reaction>
</comment>
<comment type="pathway">
    <text evidence="1">Cell wall biogenesis; lipoteichoic acid biosynthesis.</text>
</comment>
<comment type="subcellular location">
    <subcellularLocation>
        <location evidence="1">Cytoplasm</location>
    </subcellularLocation>
</comment>
<comment type="similarity">
    <text evidence="1">Belongs to the ATP-dependent AMP-binding enzyme family. DltA subfamily.</text>
</comment>
<sequence length="512" mass="56927">MIKDMIASIEQFAQTQADFPVYDCLGERRTYGQLKRDSDSIAAFIDSLALLAKSPVLVFGAQTYDMLATFVALTKSGHAYIPVDVHSAPERILAIIEIAKPSLIIAIEEFPLTIEGISLVSLSEIESAKLAEMPYERTHSVKGDDNYYIIFTSGTTGQPKGVQISHDNLLSFTNWMIEDAAFDVPKQPQMLAQPPYSFDLSVMYWAPTLALGGTLFALPKELVADFKQLFTTIAQLPVGIWTSTPSFADMAMLSDDFCQAKMPALTHFYFDGEELTVSTARKLFERFPSAKIINAYGPTEATVALSAIEITREMVDNYTRLPIGYPKPDSPTYIIDEDGKELASGEQGEIIVTGPAVSKGYLNNPEKTAEAFFTFKGQPAYHTGDIGSLTEDNILLYGGRLDFQIKYAGYRIELEDVSQQLNQSPMVASAVAVPRYNKEHKVQNLLAYIVVKDGVKERFDRELELTKAIKASVKDHMMSYMMPSKFLYRDSLPLTPNGKIDIKTLINEVNNR</sequence>
<dbReference type="EC" id="6.2.1.54" evidence="1"/>
<dbReference type="EMBL" id="CP000829">
    <property type="protein sequence ID" value="ACI61337.1"/>
    <property type="molecule type" value="Genomic_DNA"/>
</dbReference>
<dbReference type="SMR" id="B5XLX5"/>
<dbReference type="KEGG" id="soz:Spy49_1037c"/>
<dbReference type="HOGENOM" id="CLU_000022_2_12_9"/>
<dbReference type="UniPathway" id="UPA00556"/>
<dbReference type="Proteomes" id="UP000001039">
    <property type="component" value="Chromosome"/>
</dbReference>
<dbReference type="GO" id="GO:0005737">
    <property type="term" value="C:cytoplasm"/>
    <property type="evidence" value="ECO:0007669"/>
    <property type="project" value="UniProtKB-SubCell"/>
</dbReference>
<dbReference type="GO" id="GO:0005524">
    <property type="term" value="F:ATP binding"/>
    <property type="evidence" value="ECO:0007669"/>
    <property type="project" value="UniProtKB-KW"/>
</dbReference>
<dbReference type="GO" id="GO:0047473">
    <property type="term" value="F:D-alanine [D-alanyl carrier protein] ligase activity"/>
    <property type="evidence" value="ECO:0007669"/>
    <property type="project" value="UniProtKB-UniRule"/>
</dbReference>
<dbReference type="GO" id="GO:0070395">
    <property type="term" value="P:lipoteichoic acid biosynthetic process"/>
    <property type="evidence" value="ECO:0007669"/>
    <property type="project" value="UniProtKB-UniRule"/>
</dbReference>
<dbReference type="CDD" id="cd05945">
    <property type="entry name" value="DltA"/>
    <property type="match status" value="1"/>
</dbReference>
<dbReference type="FunFam" id="3.30.300.30:FF:000012">
    <property type="entry name" value="D-alanine--D-alanyl carrier protein ligase"/>
    <property type="match status" value="1"/>
</dbReference>
<dbReference type="Gene3D" id="3.30.300.30">
    <property type="match status" value="1"/>
</dbReference>
<dbReference type="Gene3D" id="3.40.50.12780">
    <property type="entry name" value="N-terminal domain of ligase-like"/>
    <property type="match status" value="1"/>
</dbReference>
<dbReference type="HAMAP" id="MF_00593">
    <property type="entry name" value="DltA"/>
    <property type="match status" value="1"/>
</dbReference>
<dbReference type="InterPro" id="IPR010071">
    <property type="entry name" value="AA_adenyl_dom"/>
</dbReference>
<dbReference type="InterPro" id="IPR025110">
    <property type="entry name" value="AMP-bd_C"/>
</dbReference>
<dbReference type="InterPro" id="IPR045851">
    <property type="entry name" value="AMP-bd_C_sf"/>
</dbReference>
<dbReference type="InterPro" id="IPR020845">
    <property type="entry name" value="AMP-binding_CS"/>
</dbReference>
<dbReference type="InterPro" id="IPR000873">
    <property type="entry name" value="AMP-dep_synth/lig_dom"/>
</dbReference>
<dbReference type="InterPro" id="IPR042099">
    <property type="entry name" value="ANL_N_sf"/>
</dbReference>
<dbReference type="InterPro" id="IPR010072">
    <property type="entry name" value="DltA"/>
</dbReference>
<dbReference type="InterPro" id="IPR044507">
    <property type="entry name" value="DltA-like"/>
</dbReference>
<dbReference type="NCBIfam" id="TIGR01733">
    <property type="entry name" value="AA-adenyl-dom"/>
    <property type="match status" value="1"/>
</dbReference>
<dbReference type="NCBIfam" id="TIGR01734">
    <property type="entry name" value="D-ala-DACP-lig"/>
    <property type="match status" value="1"/>
</dbReference>
<dbReference type="NCBIfam" id="NF003417">
    <property type="entry name" value="PRK04813.1"/>
    <property type="match status" value="1"/>
</dbReference>
<dbReference type="PANTHER" id="PTHR45398">
    <property type="match status" value="1"/>
</dbReference>
<dbReference type="PANTHER" id="PTHR45398:SF1">
    <property type="entry name" value="ENZYME, PUTATIVE (JCVI)-RELATED"/>
    <property type="match status" value="1"/>
</dbReference>
<dbReference type="Pfam" id="PF00501">
    <property type="entry name" value="AMP-binding"/>
    <property type="match status" value="1"/>
</dbReference>
<dbReference type="Pfam" id="PF13193">
    <property type="entry name" value="AMP-binding_C"/>
    <property type="match status" value="1"/>
</dbReference>
<dbReference type="SUPFAM" id="SSF56801">
    <property type="entry name" value="Acetyl-CoA synthetase-like"/>
    <property type="match status" value="1"/>
</dbReference>
<dbReference type="PROSITE" id="PS00455">
    <property type="entry name" value="AMP_BINDING"/>
    <property type="match status" value="1"/>
</dbReference>
<protein>
    <recommendedName>
        <fullName evidence="1">D-alanine--D-alanyl carrier protein ligase</fullName>
        <shortName evidence="1">DCL</shortName>
        <ecNumber evidence="1">6.2.1.54</ecNumber>
    </recommendedName>
    <alternativeName>
        <fullName evidence="1">D-alanine--poly(phosphoribitol) ligase subunit 1</fullName>
    </alternativeName>
    <alternativeName>
        <fullName evidence="1">D-alanine-activating enzyme</fullName>
        <shortName evidence="1">DAE</shortName>
    </alternativeName>
</protein>
<proteinExistence type="inferred from homology"/>
<feature type="chain" id="PRO_1000129823" description="D-alanine--D-alanyl carrier protein ligase">
    <location>
        <begin position="1"/>
        <end position="512"/>
    </location>
</feature>
<feature type="binding site" evidence="1">
    <location>
        <begin position="152"/>
        <end position="153"/>
    </location>
    <ligand>
        <name>ATP</name>
        <dbReference type="ChEBI" id="CHEBI:30616"/>
    </ligand>
</feature>
<feature type="binding site" evidence="1">
    <location>
        <position position="199"/>
    </location>
    <ligand>
        <name>D-alanine</name>
        <dbReference type="ChEBI" id="CHEBI:57416"/>
    </ligand>
</feature>
<feature type="binding site" evidence="1">
    <location>
        <begin position="294"/>
        <end position="299"/>
    </location>
    <ligand>
        <name>ATP</name>
        <dbReference type="ChEBI" id="CHEBI:30616"/>
    </ligand>
</feature>
<feature type="binding site" evidence="1">
    <location>
        <position position="303"/>
    </location>
    <ligand>
        <name>D-alanine</name>
        <dbReference type="ChEBI" id="CHEBI:57416"/>
    </ligand>
</feature>
<feature type="binding site" evidence="1">
    <location>
        <position position="385"/>
    </location>
    <ligand>
        <name>ATP</name>
        <dbReference type="ChEBI" id="CHEBI:30616"/>
    </ligand>
</feature>
<feature type="binding site" evidence="1">
    <location>
        <begin position="397"/>
        <end position="400"/>
    </location>
    <ligand>
        <name>ATP</name>
        <dbReference type="ChEBI" id="CHEBI:30616"/>
    </ligand>
</feature>
<feature type="binding site" evidence="1">
    <location>
        <position position="499"/>
    </location>
    <ligand>
        <name>ATP</name>
        <dbReference type="ChEBI" id="CHEBI:30616"/>
    </ligand>
</feature>
<feature type="binding site" evidence="1">
    <location>
        <position position="499"/>
    </location>
    <ligand>
        <name>D-alanine</name>
        <dbReference type="ChEBI" id="CHEBI:57416"/>
    </ligand>
</feature>
<organism>
    <name type="scientific">Streptococcus pyogenes serotype M49 (strain NZ131)</name>
    <dbReference type="NCBI Taxonomy" id="471876"/>
    <lineage>
        <taxon>Bacteria</taxon>
        <taxon>Bacillati</taxon>
        <taxon>Bacillota</taxon>
        <taxon>Bacilli</taxon>
        <taxon>Lactobacillales</taxon>
        <taxon>Streptococcaceae</taxon>
        <taxon>Streptococcus</taxon>
    </lineage>
</organism>
<name>DLTA_STRPZ</name>
<evidence type="ECO:0000255" key="1">
    <source>
        <dbReference type="HAMAP-Rule" id="MF_00593"/>
    </source>
</evidence>
<reference key="1">
    <citation type="journal article" date="2008" name="J. Bacteriol.">
        <title>Genome sequence of a nephritogenic and highly transformable M49 strain of Streptococcus pyogenes.</title>
        <authorList>
            <person name="McShan W.M."/>
            <person name="Ferretti J.J."/>
            <person name="Karasawa T."/>
            <person name="Suvorov A.N."/>
            <person name="Lin S."/>
            <person name="Qin B."/>
            <person name="Jia H."/>
            <person name="Kenton S."/>
            <person name="Najar F."/>
            <person name="Wu H."/>
            <person name="Scott J."/>
            <person name="Roe B.A."/>
            <person name="Savic D.J."/>
        </authorList>
    </citation>
    <scope>NUCLEOTIDE SEQUENCE [LARGE SCALE GENOMIC DNA]</scope>
    <source>
        <strain>NZ131</strain>
    </source>
</reference>
<keyword id="KW-0067">ATP-binding</keyword>
<keyword id="KW-0963">Cytoplasm</keyword>
<keyword id="KW-0436">Ligase</keyword>
<keyword id="KW-0547">Nucleotide-binding</keyword>
<gene>
    <name evidence="1" type="primary">dltA</name>
    <name type="ordered locus">Spy49_1037c</name>
</gene>
<accession>B5XLX5</accession>